<protein>
    <recommendedName>
        <fullName evidence="1">Curved DNA-binding protein</fullName>
    </recommendedName>
</protein>
<gene>
    <name evidence="1" type="primary">cbpA</name>
    <name type="ordered locus">EcolC_2595</name>
</gene>
<reference key="1">
    <citation type="submission" date="2008-02" db="EMBL/GenBank/DDBJ databases">
        <title>Complete sequence of Escherichia coli C str. ATCC 8739.</title>
        <authorList>
            <person name="Copeland A."/>
            <person name="Lucas S."/>
            <person name="Lapidus A."/>
            <person name="Glavina del Rio T."/>
            <person name="Dalin E."/>
            <person name="Tice H."/>
            <person name="Bruce D."/>
            <person name="Goodwin L."/>
            <person name="Pitluck S."/>
            <person name="Kiss H."/>
            <person name="Brettin T."/>
            <person name="Detter J.C."/>
            <person name="Han C."/>
            <person name="Kuske C.R."/>
            <person name="Schmutz J."/>
            <person name="Larimer F."/>
            <person name="Land M."/>
            <person name="Hauser L."/>
            <person name="Kyrpides N."/>
            <person name="Mikhailova N."/>
            <person name="Ingram L."/>
            <person name="Richardson P."/>
        </authorList>
    </citation>
    <scope>NUCLEOTIDE SEQUENCE [LARGE SCALE GENOMIC DNA]</scope>
    <source>
        <strain>ATCC 8739 / DSM 1576 / NBRC 3972 / NCIMB 8545 / WDCM 00012 / Crooks</strain>
    </source>
</reference>
<evidence type="ECO:0000255" key="1">
    <source>
        <dbReference type="HAMAP-Rule" id="MF_01154"/>
    </source>
</evidence>
<keyword id="KW-0143">Chaperone</keyword>
<keyword id="KW-0963">Cytoplasm</keyword>
<keyword id="KW-0238">DNA-binding</keyword>
<accession>B1IV97</accession>
<sequence>MELKDYYAIMGVKPTDDLKTIKTAYRRLARKYHPDVSKEPDAEARFKEVAEAWEVLSDEQRRAEYDQMWQHRNDPQFNRQFHHGDGQSFNAEDFDDIFSSIFGQHARQSRQRPATRGHDIEIEVAVFLEETLTEHKRTISYNLPVYNAFGMIEQEIPKTLNVKIPAGVGNGQRIRLKGQGTPGENGGPNGDLWLVIHIAPHPLFDIVGQDLEIVVPVSPWEAALGAKVTVPTLKESILLTIPPGSQAGQRLRVKGKGLVSKKQTGDLYAVLKIVMPPKPDENTAALWQQLADAQSSFDPRKDWGKA</sequence>
<comment type="function">
    <text evidence="1">DNA-binding protein that preferentially recognizes a curved DNA sequence. It is probably a functional analog of DnaJ; displays overlapping activities with DnaJ, but functions under different conditions, probably acting as a molecular chaperone in an adaptive response to environmental stresses other than heat shock. Lacks autonomous chaperone activity; binds native substrates and targets them for recognition by DnaK. Its activity is inhibited by the binding of CbpM.</text>
</comment>
<comment type="subcellular location">
    <subcellularLocation>
        <location evidence="1">Cytoplasm</location>
        <location evidence="1">Nucleoid</location>
    </subcellularLocation>
</comment>
<feature type="chain" id="PRO_1000085339" description="Curved DNA-binding protein">
    <location>
        <begin position="1"/>
        <end position="306"/>
    </location>
</feature>
<feature type="domain" description="J" evidence="1">
    <location>
        <begin position="5"/>
        <end position="69"/>
    </location>
</feature>
<organism>
    <name type="scientific">Escherichia coli (strain ATCC 8739 / DSM 1576 / NBRC 3972 / NCIMB 8545 / WDCM 00012 / Crooks)</name>
    <dbReference type="NCBI Taxonomy" id="481805"/>
    <lineage>
        <taxon>Bacteria</taxon>
        <taxon>Pseudomonadati</taxon>
        <taxon>Pseudomonadota</taxon>
        <taxon>Gammaproteobacteria</taxon>
        <taxon>Enterobacterales</taxon>
        <taxon>Enterobacteriaceae</taxon>
        <taxon>Escherichia</taxon>
    </lineage>
</organism>
<dbReference type="EMBL" id="CP000946">
    <property type="protein sequence ID" value="ACA78226.1"/>
    <property type="molecule type" value="Genomic_DNA"/>
</dbReference>
<dbReference type="RefSeq" id="WP_000420621.1">
    <property type="nucleotide sequence ID" value="NZ_MTFT01000050.1"/>
</dbReference>
<dbReference type="SMR" id="B1IV97"/>
<dbReference type="GeneID" id="86863513"/>
<dbReference type="KEGG" id="ecl:EcolC_2595"/>
<dbReference type="HOGENOM" id="CLU_017633_0_0_6"/>
<dbReference type="GO" id="GO:0005737">
    <property type="term" value="C:cytoplasm"/>
    <property type="evidence" value="ECO:0007669"/>
    <property type="project" value="UniProtKB-UniRule"/>
</dbReference>
<dbReference type="GO" id="GO:0009295">
    <property type="term" value="C:nucleoid"/>
    <property type="evidence" value="ECO:0007669"/>
    <property type="project" value="UniProtKB-SubCell"/>
</dbReference>
<dbReference type="GO" id="GO:0003681">
    <property type="term" value="F:bent DNA binding"/>
    <property type="evidence" value="ECO:0007669"/>
    <property type="project" value="UniProtKB-UniRule"/>
</dbReference>
<dbReference type="GO" id="GO:0051082">
    <property type="term" value="F:unfolded protein binding"/>
    <property type="evidence" value="ECO:0007669"/>
    <property type="project" value="InterPro"/>
</dbReference>
<dbReference type="GO" id="GO:0051085">
    <property type="term" value="P:chaperone cofactor-dependent protein refolding"/>
    <property type="evidence" value="ECO:0007669"/>
    <property type="project" value="TreeGrafter"/>
</dbReference>
<dbReference type="GO" id="GO:0042026">
    <property type="term" value="P:protein refolding"/>
    <property type="evidence" value="ECO:0007669"/>
    <property type="project" value="TreeGrafter"/>
</dbReference>
<dbReference type="CDD" id="cd06257">
    <property type="entry name" value="DnaJ"/>
    <property type="match status" value="1"/>
</dbReference>
<dbReference type="CDD" id="cd10747">
    <property type="entry name" value="DnaJ_C"/>
    <property type="match status" value="1"/>
</dbReference>
<dbReference type="FunFam" id="1.10.287.110:FF:000013">
    <property type="entry name" value="Curved DNA-binding protein"/>
    <property type="match status" value="1"/>
</dbReference>
<dbReference type="FunFam" id="2.60.260.20:FF:000008">
    <property type="entry name" value="Curved DNA-binding protein"/>
    <property type="match status" value="1"/>
</dbReference>
<dbReference type="FunFam" id="2.60.260.20:FF:000010">
    <property type="entry name" value="Curved DNA-binding protein"/>
    <property type="match status" value="1"/>
</dbReference>
<dbReference type="Gene3D" id="1.10.287.110">
    <property type="entry name" value="DnaJ domain"/>
    <property type="match status" value="1"/>
</dbReference>
<dbReference type="Gene3D" id="1.20.5.460">
    <property type="entry name" value="Single helix bin"/>
    <property type="match status" value="1"/>
</dbReference>
<dbReference type="Gene3D" id="2.60.260.20">
    <property type="entry name" value="Urease metallochaperone UreE, N-terminal domain"/>
    <property type="match status" value="2"/>
</dbReference>
<dbReference type="HAMAP" id="MF_01154">
    <property type="entry name" value="CbpA"/>
    <property type="match status" value="1"/>
</dbReference>
<dbReference type="InterPro" id="IPR023859">
    <property type="entry name" value="DNA-bd_curved-DNA"/>
</dbReference>
<dbReference type="InterPro" id="IPR002939">
    <property type="entry name" value="DnaJ_C"/>
</dbReference>
<dbReference type="InterPro" id="IPR001623">
    <property type="entry name" value="DnaJ_domain"/>
</dbReference>
<dbReference type="InterPro" id="IPR018253">
    <property type="entry name" value="DnaJ_domain_CS"/>
</dbReference>
<dbReference type="InterPro" id="IPR008971">
    <property type="entry name" value="HSP40/DnaJ_pept-bd"/>
</dbReference>
<dbReference type="InterPro" id="IPR036869">
    <property type="entry name" value="J_dom_sf"/>
</dbReference>
<dbReference type="NCBIfam" id="NF007618">
    <property type="entry name" value="PRK10266.1"/>
    <property type="match status" value="1"/>
</dbReference>
<dbReference type="PANTHER" id="PTHR43096">
    <property type="entry name" value="DNAJ HOMOLOG 1, MITOCHONDRIAL-RELATED"/>
    <property type="match status" value="1"/>
</dbReference>
<dbReference type="PANTHER" id="PTHR43096:SF52">
    <property type="entry name" value="DNAJ HOMOLOG 1, MITOCHONDRIAL-RELATED"/>
    <property type="match status" value="1"/>
</dbReference>
<dbReference type="Pfam" id="PF00226">
    <property type="entry name" value="DnaJ"/>
    <property type="match status" value="1"/>
</dbReference>
<dbReference type="Pfam" id="PF01556">
    <property type="entry name" value="DnaJ_C"/>
    <property type="match status" value="1"/>
</dbReference>
<dbReference type="PRINTS" id="PR00625">
    <property type="entry name" value="JDOMAIN"/>
</dbReference>
<dbReference type="SMART" id="SM00271">
    <property type="entry name" value="DnaJ"/>
    <property type="match status" value="1"/>
</dbReference>
<dbReference type="SUPFAM" id="SSF46565">
    <property type="entry name" value="Chaperone J-domain"/>
    <property type="match status" value="1"/>
</dbReference>
<dbReference type="SUPFAM" id="SSF49493">
    <property type="entry name" value="HSP40/DnaJ peptide-binding domain"/>
    <property type="match status" value="2"/>
</dbReference>
<dbReference type="PROSITE" id="PS00636">
    <property type="entry name" value="DNAJ_1"/>
    <property type="match status" value="1"/>
</dbReference>
<dbReference type="PROSITE" id="PS50076">
    <property type="entry name" value="DNAJ_2"/>
    <property type="match status" value="1"/>
</dbReference>
<proteinExistence type="inferred from homology"/>
<name>CBPA_ECOLC</name>